<evidence type="ECO:0000250" key="1"/>
<evidence type="ECO:0000255" key="2"/>
<evidence type="ECO:0000305" key="3"/>
<dbReference type="EMBL" id="AP009324">
    <property type="protein sequence ID" value="BAF78810.1"/>
    <property type="molecule type" value="Genomic_DNA"/>
</dbReference>
<dbReference type="RefSeq" id="WP_000702263.1">
    <property type="nucleotide sequence ID" value="NC_009782.1"/>
</dbReference>
<dbReference type="BMRB" id="A7X482"/>
<dbReference type="SMR" id="A7X482"/>
<dbReference type="KEGG" id="saw:SAHV_1927"/>
<dbReference type="HOGENOM" id="CLU_166895_0_0_9"/>
<dbReference type="PRO" id="PR:A7X482"/>
<dbReference type="GO" id="GO:0005576">
    <property type="term" value="C:extracellular region"/>
    <property type="evidence" value="ECO:0007669"/>
    <property type="project" value="UniProtKB-SubCell"/>
</dbReference>
<dbReference type="Gene3D" id="1.20.1270.10">
    <property type="match status" value="1"/>
</dbReference>
<dbReference type="InterPro" id="IPR029048">
    <property type="entry name" value="HSP70_C_sf"/>
</dbReference>
<dbReference type="InterPro" id="IPR021612">
    <property type="entry name" value="SCIN"/>
</dbReference>
<dbReference type="Pfam" id="PF11546">
    <property type="entry name" value="CompInhib_SCIN"/>
    <property type="match status" value="1"/>
</dbReference>
<comment type="function">
    <text evidence="1">Involved in countering the first line of host defense mechanisms. Efficiently inhibits opsonization, phagocytosis and killing of S.aureus by human neutrophils. Acts by binding and stabilizing human C3 convertases (C4b2a and C3bBb), leading to their inactivation. The convertases are no longer able to cleave complement C3, therefore preventing further C3b deposition on the bacterial surface and phagocytosis of the bacterium. Also prevents C5a-induced neutrophil responses (By similarity).</text>
</comment>
<comment type="subcellular location">
    <subcellularLocation>
        <location evidence="1">Secreted</location>
    </subcellularLocation>
</comment>
<comment type="similarity">
    <text evidence="3">Belongs to the SCIN family.</text>
</comment>
<protein>
    <recommendedName>
        <fullName>Staphylococcal complement inhibitor</fullName>
        <shortName>SCIN</shortName>
    </recommendedName>
</protein>
<organism>
    <name type="scientific">Staphylococcus aureus (strain Mu3 / ATCC 700698)</name>
    <dbReference type="NCBI Taxonomy" id="418127"/>
    <lineage>
        <taxon>Bacteria</taxon>
        <taxon>Bacillati</taxon>
        <taxon>Bacillota</taxon>
        <taxon>Bacilli</taxon>
        <taxon>Bacillales</taxon>
        <taxon>Staphylococcaceae</taxon>
        <taxon>Staphylococcus</taxon>
    </lineage>
</organism>
<keyword id="KW-0964">Secreted</keyword>
<keyword id="KW-0732">Signal</keyword>
<keyword id="KW-0843">Virulence</keyword>
<reference key="1">
    <citation type="journal article" date="2008" name="Antimicrob. Agents Chemother.">
        <title>Mutated response regulator graR is responsible for phenotypic conversion of Staphylococcus aureus from heterogeneous vancomycin-intermediate resistance to vancomycin-intermediate resistance.</title>
        <authorList>
            <person name="Neoh H.-M."/>
            <person name="Cui L."/>
            <person name="Yuzawa H."/>
            <person name="Takeuchi F."/>
            <person name="Matsuo M."/>
            <person name="Hiramatsu K."/>
        </authorList>
    </citation>
    <scope>NUCLEOTIDE SEQUENCE [LARGE SCALE GENOMIC DNA]</scope>
    <source>
        <strain>Mu3 / ATCC 700698</strain>
    </source>
</reference>
<sequence length="116" mass="13067">MKIRKSILAGTLAIVLASPLVTNLDKNEAQASTSLPTSNEYQNEKLANELKSLLDELNVNELATGSLNTYYKRTIKISGQKAMYALKSKDFKKMSEAKYQLQKIYNEIDEALKSKY</sequence>
<name>SCIN_STAA1</name>
<gene>
    <name type="primary">scn</name>
    <name type="ordered locus">SAHV_1927</name>
</gene>
<feature type="signal peptide" evidence="2">
    <location>
        <begin position="1"/>
        <end position="31"/>
    </location>
</feature>
<feature type="chain" id="PRO_0000319870" description="Staphylococcal complement inhibitor">
    <location>
        <begin position="32"/>
        <end position="116"/>
    </location>
</feature>
<feature type="region of interest" description="Essential for activity" evidence="1">
    <location>
        <begin position="62"/>
        <end position="79"/>
    </location>
</feature>
<proteinExistence type="inferred from homology"/>
<accession>A7X482</accession>